<keyword id="KW-1003">Cell membrane</keyword>
<keyword id="KW-0472">Membrane</keyword>
<keyword id="KW-1185">Reference proteome</keyword>
<keyword id="KW-0812">Transmembrane</keyword>
<keyword id="KW-1133">Transmembrane helix</keyword>
<protein>
    <recommendedName>
        <fullName evidence="1">UPF0370 protein YpfN</fullName>
    </recommendedName>
</protein>
<accession>A9MHQ7</accession>
<sequence length="66" mass="8089">MDWLAKYWWILVLVFLVGVLLNVIKDLKRIDHKKFLANKPELPPHRDFNDKWDDEDDWPKKDQSKK</sequence>
<reference key="1">
    <citation type="submission" date="2007-11" db="EMBL/GenBank/DDBJ databases">
        <authorList>
            <consortium name="The Salmonella enterica serovar Arizonae Genome Sequencing Project"/>
            <person name="McClelland M."/>
            <person name="Sanderson E.K."/>
            <person name="Porwollik S."/>
            <person name="Spieth J."/>
            <person name="Clifton W.S."/>
            <person name="Fulton R."/>
            <person name="Chunyan W."/>
            <person name="Wollam A."/>
            <person name="Shah N."/>
            <person name="Pepin K."/>
            <person name="Bhonagiri V."/>
            <person name="Nash W."/>
            <person name="Johnson M."/>
            <person name="Thiruvilangam P."/>
            <person name="Wilson R."/>
        </authorList>
    </citation>
    <scope>NUCLEOTIDE SEQUENCE [LARGE SCALE GENOMIC DNA]</scope>
    <source>
        <strain>ATCC BAA-731 / CDC346-86 / RSK2980</strain>
    </source>
</reference>
<evidence type="ECO:0000255" key="1">
    <source>
        <dbReference type="HAMAP-Rule" id="MF_01566"/>
    </source>
</evidence>
<evidence type="ECO:0000256" key="2">
    <source>
        <dbReference type="SAM" id="MobiDB-lite"/>
    </source>
</evidence>
<comment type="subcellular location">
    <subcellularLocation>
        <location evidence="1">Cell membrane</location>
        <topology evidence="1">Single-pass membrane protein</topology>
    </subcellularLocation>
</comment>
<comment type="similarity">
    <text evidence="1">Belongs to the UPF0370 family.</text>
</comment>
<gene>
    <name evidence="1" type="primary">ypfN</name>
    <name type="ordered locus">SARI_00398</name>
</gene>
<name>YPFN_SALAR</name>
<organism>
    <name type="scientific">Salmonella arizonae (strain ATCC BAA-731 / CDC346-86 / RSK2980)</name>
    <dbReference type="NCBI Taxonomy" id="41514"/>
    <lineage>
        <taxon>Bacteria</taxon>
        <taxon>Pseudomonadati</taxon>
        <taxon>Pseudomonadota</taxon>
        <taxon>Gammaproteobacteria</taxon>
        <taxon>Enterobacterales</taxon>
        <taxon>Enterobacteriaceae</taxon>
        <taxon>Salmonella</taxon>
    </lineage>
</organism>
<feature type="chain" id="PRO_1000087825" description="UPF0370 protein YpfN">
    <location>
        <begin position="1"/>
        <end position="66"/>
    </location>
</feature>
<feature type="transmembrane region" description="Helical" evidence="1">
    <location>
        <begin position="4"/>
        <end position="24"/>
    </location>
</feature>
<feature type="region of interest" description="Disordered" evidence="2">
    <location>
        <begin position="39"/>
        <end position="66"/>
    </location>
</feature>
<feature type="compositionally biased region" description="Basic and acidic residues" evidence="2">
    <location>
        <begin position="42"/>
        <end position="51"/>
    </location>
</feature>
<dbReference type="EMBL" id="CP000880">
    <property type="protein sequence ID" value="ABX20335.1"/>
    <property type="molecule type" value="Genomic_DNA"/>
</dbReference>
<dbReference type="SMR" id="A9MHQ7"/>
<dbReference type="STRING" id="41514.SARI_00398"/>
<dbReference type="KEGG" id="ses:SARI_00398"/>
<dbReference type="HOGENOM" id="CLU_198936_0_0_6"/>
<dbReference type="Proteomes" id="UP000002084">
    <property type="component" value="Chromosome"/>
</dbReference>
<dbReference type="GO" id="GO:0005886">
    <property type="term" value="C:plasma membrane"/>
    <property type="evidence" value="ECO:0007669"/>
    <property type="project" value="UniProtKB-SubCell"/>
</dbReference>
<dbReference type="HAMAP" id="MF_01566">
    <property type="entry name" value="UPF0370"/>
    <property type="match status" value="1"/>
</dbReference>
<dbReference type="InterPro" id="IPR020910">
    <property type="entry name" value="UPF0370"/>
</dbReference>
<dbReference type="NCBIfam" id="NF010185">
    <property type="entry name" value="PRK13664.1"/>
    <property type="match status" value="1"/>
</dbReference>
<dbReference type="Pfam" id="PF13980">
    <property type="entry name" value="UPF0370"/>
    <property type="match status" value="1"/>
</dbReference>
<proteinExistence type="inferred from homology"/>